<keyword id="KW-0963">Cytoplasm</keyword>
<keyword id="KW-1185">Reference proteome</keyword>
<keyword id="KW-0687">Ribonucleoprotein</keyword>
<keyword id="KW-0689">Ribosomal protein</keyword>
<comment type="function">
    <text evidence="1">Component of the large ribosomal subunit. The ribosome is a large ribonucleoprotein complex responsible for the synthesis of proteins in the cell.</text>
</comment>
<comment type="subunit">
    <text evidence="1">Component of the large ribosomal subunit.</text>
</comment>
<comment type="subcellular location">
    <subcellularLocation>
        <location evidence="1">Cytoplasm</location>
    </subcellularLocation>
</comment>
<comment type="similarity">
    <text evidence="3">Belongs to the universal ribosomal protein uL4 family.</text>
</comment>
<organism>
    <name type="scientific">Xenopus tropicalis</name>
    <name type="common">Western clawed frog</name>
    <name type="synonym">Silurana tropicalis</name>
    <dbReference type="NCBI Taxonomy" id="8364"/>
    <lineage>
        <taxon>Eukaryota</taxon>
        <taxon>Metazoa</taxon>
        <taxon>Chordata</taxon>
        <taxon>Craniata</taxon>
        <taxon>Vertebrata</taxon>
        <taxon>Euteleostomi</taxon>
        <taxon>Amphibia</taxon>
        <taxon>Batrachia</taxon>
        <taxon>Anura</taxon>
        <taxon>Pipoidea</taxon>
        <taxon>Pipidae</taxon>
        <taxon>Xenopodinae</taxon>
        <taxon>Xenopus</taxon>
        <taxon>Silurana</taxon>
    </lineage>
</organism>
<evidence type="ECO:0000250" key="1">
    <source>
        <dbReference type="UniProtKB" id="P36578"/>
    </source>
</evidence>
<evidence type="ECO:0000256" key="2">
    <source>
        <dbReference type="SAM" id="MobiDB-lite"/>
    </source>
</evidence>
<evidence type="ECO:0000305" key="3"/>
<reference key="1">
    <citation type="journal article" date="1986" name="Gene">
        <title>Complementarity of conserved sequence elements present in 28S ribosomal RNA and in ribosomal protein genes of Xenopus laevis and Xenopus tropicalis.</title>
        <authorList>
            <person name="Cutruzzola F."/>
            <person name="Loreni F."/>
            <person name="Bozzoni I."/>
        </authorList>
    </citation>
    <scope>NUCLEOTIDE SEQUENCE [GENOMIC DNA]</scope>
</reference>
<protein>
    <recommendedName>
        <fullName evidence="3">Large ribosomal subunit protein uL4</fullName>
    </recommendedName>
    <alternativeName>
        <fullName>60S ribosomal protein L4</fullName>
    </alternativeName>
    <alternativeName>
        <fullName>L1</fullName>
    </alternativeName>
</protein>
<dbReference type="EMBL" id="M15678">
    <property type="protein sequence ID" value="AAA49951.1"/>
    <property type="molecule type" value="Genomic_DNA"/>
</dbReference>
<dbReference type="PIR" id="A27166">
    <property type="entry name" value="A27166"/>
</dbReference>
<dbReference type="SMR" id="P14117"/>
<dbReference type="STRING" id="8364.ENSXETP00000028753"/>
<dbReference type="PaxDb" id="8364-ENSXETP00000034688"/>
<dbReference type="eggNOG" id="KOG1475">
    <property type="taxonomic scope" value="Eukaryota"/>
</dbReference>
<dbReference type="InParanoid" id="P14117"/>
<dbReference type="Proteomes" id="UP000008143">
    <property type="component" value="Unplaced"/>
</dbReference>
<dbReference type="GO" id="GO:0005737">
    <property type="term" value="C:cytoplasm"/>
    <property type="evidence" value="ECO:0007669"/>
    <property type="project" value="UniProtKB-SubCell"/>
</dbReference>
<dbReference type="GO" id="GO:1990904">
    <property type="term" value="C:ribonucleoprotein complex"/>
    <property type="evidence" value="ECO:0007669"/>
    <property type="project" value="UniProtKB-KW"/>
</dbReference>
<dbReference type="GO" id="GO:0005840">
    <property type="term" value="C:ribosome"/>
    <property type="evidence" value="ECO:0007669"/>
    <property type="project" value="UniProtKB-KW"/>
</dbReference>
<dbReference type="GO" id="GO:0003735">
    <property type="term" value="F:structural constituent of ribosome"/>
    <property type="evidence" value="ECO:0007669"/>
    <property type="project" value="InterPro"/>
</dbReference>
<dbReference type="GO" id="GO:0006412">
    <property type="term" value="P:translation"/>
    <property type="evidence" value="ECO:0007669"/>
    <property type="project" value="InterPro"/>
</dbReference>
<dbReference type="Gene3D" id="3.40.1370.10">
    <property type="match status" value="1"/>
</dbReference>
<dbReference type="InterPro" id="IPR025755">
    <property type="entry name" value="Ribos_uL4_C_dom"/>
</dbReference>
<dbReference type="InterPro" id="IPR023574">
    <property type="entry name" value="Ribosomal_uL4_dom_sf"/>
</dbReference>
<dbReference type="InterPro" id="IPR045240">
    <property type="entry name" value="Ribosomal_uL4_euk/arch"/>
</dbReference>
<dbReference type="PANTHER" id="PTHR19431">
    <property type="entry name" value="60S RIBOSOMAL PROTEIN L4"/>
    <property type="match status" value="1"/>
</dbReference>
<dbReference type="Pfam" id="PF14374">
    <property type="entry name" value="Ribos_L4_asso_C"/>
    <property type="match status" value="1"/>
</dbReference>
<dbReference type="SUPFAM" id="SSF52166">
    <property type="entry name" value="Ribosomal protein L4"/>
    <property type="match status" value="1"/>
</dbReference>
<accession>P14117</accession>
<proteinExistence type="inferred from homology"/>
<feature type="chain" id="PRO_0000129356" description="Large ribosomal subunit protein uL4">
    <location>
        <begin position="1" status="less than"/>
        <end position="96" status="greater than"/>
    </location>
</feature>
<feature type="region of interest" description="Disordered" evidence="2">
    <location>
        <begin position="77"/>
        <end position="96"/>
    </location>
</feature>
<feature type="compositionally biased region" description="Basic residues" evidence="2">
    <location>
        <begin position="79"/>
        <end position="96"/>
    </location>
</feature>
<feature type="non-terminal residue">
    <location>
        <position position="1"/>
    </location>
</feature>
<feature type="non-terminal residue">
    <location>
        <position position="96"/>
    </location>
</feature>
<name>RL4_XENTR</name>
<gene>
    <name type="primary">rpl4</name>
    <name type="synonym">rpl1</name>
</gene>
<sequence>ITLLNVSKLNLLRLALGGHVGRFCIWTESSFRKLDDLYGTWRKSAKLKADYNLPMHKMTNTDLTRILKSQEIQRALRAPNKKVKRRELKKNPLKNL</sequence>